<organism>
    <name type="scientific">Rhodospirillum rubrum (strain ATCC 11170 / ATH 1.1.1 / DSM 467 / LMG 4362 / NCIMB 8255 / S1)</name>
    <dbReference type="NCBI Taxonomy" id="269796"/>
    <lineage>
        <taxon>Bacteria</taxon>
        <taxon>Pseudomonadati</taxon>
        <taxon>Pseudomonadota</taxon>
        <taxon>Alphaproteobacteria</taxon>
        <taxon>Rhodospirillales</taxon>
        <taxon>Rhodospirillaceae</taxon>
        <taxon>Rhodospirillum</taxon>
    </lineage>
</organism>
<evidence type="ECO:0000255" key="1">
    <source>
        <dbReference type="HAMAP-Rule" id="MF_01361"/>
    </source>
</evidence>
<accession>Q2RY71</accession>
<dbReference type="EMBL" id="CP000230">
    <property type="protein sequence ID" value="ABC20924.1"/>
    <property type="molecule type" value="Genomic_DNA"/>
</dbReference>
<dbReference type="RefSeq" id="WP_011387880.1">
    <property type="nucleotide sequence ID" value="NC_007643.1"/>
</dbReference>
<dbReference type="RefSeq" id="YP_425211.1">
    <property type="nucleotide sequence ID" value="NC_007643.1"/>
</dbReference>
<dbReference type="STRING" id="269796.Rru_A0119"/>
<dbReference type="EnsemblBacteria" id="ABC20924">
    <property type="protein sequence ID" value="ABC20924"/>
    <property type="gene ID" value="Rru_A0119"/>
</dbReference>
<dbReference type="KEGG" id="rru:Rru_A0119"/>
<dbReference type="PATRIC" id="fig|269796.9.peg.173"/>
<dbReference type="eggNOG" id="COG5487">
    <property type="taxonomic scope" value="Bacteria"/>
</dbReference>
<dbReference type="HOGENOM" id="CLU_187346_1_0_5"/>
<dbReference type="Proteomes" id="UP000001929">
    <property type="component" value="Chromosome"/>
</dbReference>
<dbReference type="GO" id="GO:0005886">
    <property type="term" value="C:plasma membrane"/>
    <property type="evidence" value="ECO:0007669"/>
    <property type="project" value="UniProtKB-SubCell"/>
</dbReference>
<dbReference type="HAMAP" id="MF_01361">
    <property type="entry name" value="UPF0391"/>
    <property type="match status" value="1"/>
</dbReference>
<dbReference type="InterPro" id="IPR009760">
    <property type="entry name" value="DUF1328"/>
</dbReference>
<dbReference type="NCBIfam" id="NF010226">
    <property type="entry name" value="PRK13682.1-1"/>
    <property type="match status" value="1"/>
</dbReference>
<dbReference type="NCBIfam" id="NF010228">
    <property type="entry name" value="PRK13682.1-3"/>
    <property type="match status" value="1"/>
</dbReference>
<dbReference type="NCBIfam" id="NF010229">
    <property type="entry name" value="PRK13682.1-4"/>
    <property type="match status" value="1"/>
</dbReference>
<dbReference type="Pfam" id="PF07043">
    <property type="entry name" value="DUF1328"/>
    <property type="match status" value="1"/>
</dbReference>
<dbReference type="PIRSF" id="PIRSF036466">
    <property type="entry name" value="UCP036466"/>
    <property type="match status" value="1"/>
</dbReference>
<sequence length="56" mass="6067">MLTWALIFLVVAVVAALFGFGGIAGAAASIAQILFFVFLVLLVISLIMHFTRRSRL</sequence>
<protein>
    <recommendedName>
        <fullName evidence="1">UPF0391 membrane protein Rru_A0119</fullName>
    </recommendedName>
</protein>
<gene>
    <name type="ordered locus">Rru_A0119</name>
</gene>
<reference key="1">
    <citation type="journal article" date="2011" name="Stand. Genomic Sci.">
        <title>Complete genome sequence of Rhodospirillum rubrum type strain (S1).</title>
        <authorList>
            <person name="Munk A.C."/>
            <person name="Copeland A."/>
            <person name="Lucas S."/>
            <person name="Lapidus A."/>
            <person name="Del Rio T.G."/>
            <person name="Barry K."/>
            <person name="Detter J.C."/>
            <person name="Hammon N."/>
            <person name="Israni S."/>
            <person name="Pitluck S."/>
            <person name="Brettin T."/>
            <person name="Bruce D."/>
            <person name="Han C."/>
            <person name="Tapia R."/>
            <person name="Gilna P."/>
            <person name="Schmutz J."/>
            <person name="Larimer F."/>
            <person name="Land M."/>
            <person name="Kyrpides N.C."/>
            <person name="Mavromatis K."/>
            <person name="Richardson P."/>
            <person name="Rohde M."/>
            <person name="Goeker M."/>
            <person name="Klenk H.P."/>
            <person name="Zhang Y."/>
            <person name="Roberts G.P."/>
            <person name="Reslewic S."/>
            <person name="Schwartz D.C."/>
        </authorList>
    </citation>
    <scope>NUCLEOTIDE SEQUENCE [LARGE SCALE GENOMIC DNA]</scope>
    <source>
        <strain>ATCC 11170 / ATH 1.1.1 / DSM 467 / LMG 4362 / NCIMB 8255 / S1</strain>
    </source>
</reference>
<keyword id="KW-1003">Cell membrane</keyword>
<keyword id="KW-0472">Membrane</keyword>
<keyword id="KW-1185">Reference proteome</keyword>
<keyword id="KW-0812">Transmembrane</keyword>
<keyword id="KW-1133">Transmembrane helix</keyword>
<comment type="subcellular location">
    <subcellularLocation>
        <location evidence="1">Cell membrane</location>
        <topology evidence="1">Multi-pass membrane protein</topology>
    </subcellularLocation>
</comment>
<comment type="similarity">
    <text evidence="1">Belongs to the UPF0391 family.</text>
</comment>
<proteinExistence type="inferred from homology"/>
<name>Y119_RHORT</name>
<feature type="chain" id="PRO_0000256782" description="UPF0391 membrane protein Rru_A0119">
    <location>
        <begin position="1"/>
        <end position="56"/>
    </location>
</feature>
<feature type="transmembrane region" description="Helical" evidence="1">
    <location>
        <begin position="4"/>
        <end position="24"/>
    </location>
</feature>
<feature type="transmembrane region" description="Helical" evidence="1">
    <location>
        <begin position="30"/>
        <end position="50"/>
    </location>
</feature>